<name>RL7_NOCSJ</name>
<protein>
    <recommendedName>
        <fullName evidence="1">Large ribosomal subunit protein bL12</fullName>
    </recommendedName>
    <alternativeName>
        <fullName evidence="2">50S ribosomal protein L7/L12</fullName>
    </alternativeName>
</protein>
<dbReference type="EMBL" id="CP000509">
    <property type="protein sequence ID" value="ABL80224.1"/>
    <property type="molecule type" value="Genomic_DNA"/>
</dbReference>
<dbReference type="RefSeq" id="WP_011754173.1">
    <property type="nucleotide sequence ID" value="NC_008699.1"/>
</dbReference>
<dbReference type="SMR" id="A1SEI9"/>
<dbReference type="STRING" id="196162.Noca_0699"/>
<dbReference type="KEGG" id="nca:Noca_0699"/>
<dbReference type="eggNOG" id="COG0222">
    <property type="taxonomic scope" value="Bacteria"/>
</dbReference>
<dbReference type="HOGENOM" id="CLU_086499_3_0_11"/>
<dbReference type="OrthoDB" id="9811748at2"/>
<dbReference type="Proteomes" id="UP000000640">
    <property type="component" value="Chromosome"/>
</dbReference>
<dbReference type="GO" id="GO:0022625">
    <property type="term" value="C:cytosolic large ribosomal subunit"/>
    <property type="evidence" value="ECO:0007669"/>
    <property type="project" value="TreeGrafter"/>
</dbReference>
<dbReference type="GO" id="GO:0003729">
    <property type="term" value="F:mRNA binding"/>
    <property type="evidence" value="ECO:0007669"/>
    <property type="project" value="TreeGrafter"/>
</dbReference>
<dbReference type="GO" id="GO:0003735">
    <property type="term" value="F:structural constituent of ribosome"/>
    <property type="evidence" value="ECO:0007669"/>
    <property type="project" value="InterPro"/>
</dbReference>
<dbReference type="GO" id="GO:0006412">
    <property type="term" value="P:translation"/>
    <property type="evidence" value="ECO:0007669"/>
    <property type="project" value="UniProtKB-UniRule"/>
</dbReference>
<dbReference type="CDD" id="cd00387">
    <property type="entry name" value="Ribosomal_L7_L12"/>
    <property type="match status" value="1"/>
</dbReference>
<dbReference type="FunFam" id="1.20.5.710:FF:000005">
    <property type="entry name" value="50S ribosomal protein L7/L12"/>
    <property type="match status" value="1"/>
</dbReference>
<dbReference type="FunFam" id="3.30.1390.10:FF:000001">
    <property type="entry name" value="50S ribosomal protein L7/L12"/>
    <property type="match status" value="1"/>
</dbReference>
<dbReference type="Gene3D" id="3.30.1390.10">
    <property type="match status" value="1"/>
</dbReference>
<dbReference type="Gene3D" id="1.20.5.710">
    <property type="entry name" value="Single helix bin"/>
    <property type="match status" value="1"/>
</dbReference>
<dbReference type="HAMAP" id="MF_00368">
    <property type="entry name" value="Ribosomal_bL12"/>
    <property type="match status" value="1"/>
</dbReference>
<dbReference type="InterPro" id="IPR000206">
    <property type="entry name" value="Ribosomal_bL12"/>
</dbReference>
<dbReference type="InterPro" id="IPR013823">
    <property type="entry name" value="Ribosomal_bL12_C"/>
</dbReference>
<dbReference type="InterPro" id="IPR014719">
    <property type="entry name" value="Ribosomal_bL12_C/ClpS-like"/>
</dbReference>
<dbReference type="InterPro" id="IPR008932">
    <property type="entry name" value="Ribosomal_bL12_oligo"/>
</dbReference>
<dbReference type="InterPro" id="IPR036235">
    <property type="entry name" value="Ribosomal_bL12_oligo_N_sf"/>
</dbReference>
<dbReference type="NCBIfam" id="TIGR00855">
    <property type="entry name" value="L12"/>
    <property type="match status" value="1"/>
</dbReference>
<dbReference type="PANTHER" id="PTHR45987">
    <property type="entry name" value="39S RIBOSOMAL PROTEIN L12"/>
    <property type="match status" value="1"/>
</dbReference>
<dbReference type="PANTHER" id="PTHR45987:SF4">
    <property type="entry name" value="LARGE RIBOSOMAL SUBUNIT PROTEIN BL12M"/>
    <property type="match status" value="1"/>
</dbReference>
<dbReference type="Pfam" id="PF00542">
    <property type="entry name" value="Ribosomal_L12"/>
    <property type="match status" value="1"/>
</dbReference>
<dbReference type="Pfam" id="PF16320">
    <property type="entry name" value="Ribosomal_L12_N"/>
    <property type="match status" value="1"/>
</dbReference>
<dbReference type="SUPFAM" id="SSF54736">
    <property type="entry name" value="ClpS-like"/>
    <property type="match status" value="1"/>
</dbReference>
<dbReference type="SUPFAM" id="SSF48300">
    <property type="entry name" value="Ribosomal protein L7/12, oligomerisation (N-terminal) domain"/>
    <property type="match status" value="1"/>
</dbReference>
<evidence type="ECO:0000255" key="1">
    <source>
        <dbReference type="HAMAP-Rule" id="MF_00368"/>
    </source>
</evidence>
<evidence type="ECO:0000305" key="2"/>
<proteinExistence type="inferred from homology"/>
<feature type="chain" id="PRO_1000007047" description="Large ribosomal subunit protein bL12">
    <location>
        <begin position="1"/>
        <end position="131"/>
    </location>
</feature>
<comment type="function">
    <text evidence="1">Forms part of the ribosomal stalk which helps the ribosome interact with GTP-bound translation factors. Is thus essential for accurate translation.</text>
</comment>
<comment type="subunit">
    <text evidence="1">Homodimer. Part of the ribosomal stalk of the 50S ribosomal subunit. Forms a multimeric L10(L12)X complex, where L10 forms an elongated spine to which 2 to 4 L12 dimers bind in a sequential fashion. Binds GTP-bound translation factors.</text>
</comment>
<comment type="similarity">
    <text evidence="1">Belongs to the bacterial ribosomal protein bL12 family.</text>
</comment>
<sequence>MAKLSTDELLDAFKEMTLIELSEFVKQFEETFGVTAAAPVAVAAAPAAGGAAAAGGDAGAEQDEFDVILESAGDKKINVIKEVRALTSLGLKEAKELVEAAPKPILEKVAKDAAEKAKEALEGAGATVTLK</sequence>
<accession>A1SEI9</accession>
<keyword id="KW-1185">Reference proteome</keyword>
<keyword id="KW-0687">Ribonucleoprotein</keyword>
<keyword id="KW-0689">Ribosomal protein</keyword>
<gene>
    <name evidence="1" type="primary">rplL</name>
    <name type="ordered locus">Noca_0699</name>
</gene>
<organism>
    <name type="scientific">Nocardioides sp. (strain ATCC BAA-499 / JS614)</name>
    <dbReference type="NCBI Taxonomy" id="196162"/>
    <lineage>
        <taxon>Bacteria</taxon>
        <taxon>Bacillati</taxon>
        <taxon>Actinomycetota</taxon>
        <taxon>Actinomycetes</taxon>
        <taxon>Propionibacteriales</taxon>
        <taxon>Nocardioidaceae</taxon>
        <taxon>Nocardioides</taxon>
    </lineage>
</organism>
<reference key="1">
    <citation type="submission" date="2006-12" db="EMBL/GenBank/DDBJ databases">
        <title>Complete sequence of chromosome 1 of Nocardioides sp. JS614.</title>
        <authorList>
            <person name="Copeland A."/>
            <person name="Lucas S."/>
            <person name="Lapidus A."/>
            <person name="Barry K."/>
            <person name="Detter J.C."/>
            <person name="Glavina del Rio T."/>
            <person name="Hammon N."/>
            <person name="Israni S."/>
            <person name="Dalin E."/>
            <person name="Tice H."/>
            <person name="Pitluck S."/>
            <person name="Thompson L.S."/>
            <person name="Brettin T."/>
            <person name="Bruce D."/>
            <person name="Han C."/>
            <person name="Tapia R."/>
            <person name="Schmutz J."/>
            <person name="Larimer F."/>
            <person name="Land M."/>
            <person name="Hauser L."/>
            <person name="Kyrpides N."/>
            <person name="Kim E."/>
            <person name="Mattes T."/>
            <person name="Gossett J."/>
            <person name="Richardson P."/>
        </authorList>
    </citation>
    <scope>NUCLEOTIDE SEQUENCE [LARGE SCALE GENOMIC DNA]</scope>
    <source>
        <strain>ATCC BAA-499 / JS614</strain>
    </source>
</reference>